<organism>
    <name type="scientific">Mus musculus</name>
    <name type="common">Mouse</name>
    <dbReference type="NCBI Taxonomy" id="10090"/>
    <lineage>
        <taxon>Eukaryota</taxon>
        <taxon>Metazoa</taxon>
        <taxon>Chordata</taxon>
        <taxon>Craniata</taxon>
        <taxon>Vertebrata</taxon>
        <taxon>Euteleostomi</taxon>
        <taxon>Mammalia</taxon>
        <taxon>Eutheria</taxon>
        <taxon>Euarchontoglires</taxon>
        <taxon>Glires</taxon>
        <taxon>Rodentia</taxon>
        <taxon>Myomorpha</taxon>
        <taxon>Muroidea</taxon>
        <taxon>Muridae</taxon>
        <taxon>Murinae</taxon>
        <taxon>Mus</taxon>
        <taxon>Mus</taxon>
    </lineage>
</organism>
<sequence>MPPSCTNSTQENNGSRVCLPLSKMPISVAHGIIRSVVLLVILGVAFLGNVVLGYVLHRKPNLLQVTNRFIFNLLVTDLLQVALVAPWVVSTAIPFFWPLNIHFCTALVSLTHLFAFASVNTIVVVSVDRYLTIIHPLSYPSKMTNRRSYILLYGTWIAAFLQSTPPLYGWGHATFDDRNAFCSMIWGASPAYTVVSVVSFLVIPLGVMIACYSVVFGAARRQQALLYKAKSHRLEVRVEDSVVHENEEGAKKRDEFQDKNEFQGQDGGGQAEAKGSSSMEESPMVAEGSSQKTGKGSLDFSAGIMEGKDSDEVSNGSMEGLEVITEFQASSAKADTGRIDANQCNIDVGEDDVEFGMDEIHFNDDVEAMRIPESSPPSRRNSTSDPPLPPCYECKAARVIFVIISTYVLSLGPYCFLAVLAVWVDIDTRVPQWVITIIIWLFFLQCCIHPYVYGYMHKSIKKEIQEVLKKLICKKSPPVEDSHPDLHETEAGTEGGIEGKAVPSHDSATSP</sequence>
<proteinExistence type="evidence at transcript level"/>
<reference key="1">
    <citation type="journal article" date="2005" name="Science">
        <title>The transcriptional landscape of the mammalian genome.</title>
        <authorList>
            <person name="Carninci P."/>
            <person name="Kasukawa T."/>
            <person name="Katayama S."/>
            <person name="Gough J."/>
            <person name="Frith M.C."/>
            <person name="Maeda N."/>
            <person name="Oyama R."/>
            <person name="Ravasi T."/>
            <person name="Lenhard B."/>
            <person name="Wells C."/>
            <person name="Kodzius R."/>
            <person name="Shimokawa K."/>
            <person name="Bajic V.B."/>
            <person name="Brenner S.E."/>
            <person name="Batalov S."/>
            <person name="Forrest A.R."/>
            <person name="Zavolan M."/>
            <person name="Davis M.J."/>
            <person name="Wilming L.G."/>
            <person name="Aidinis V."/>
            <person name="Allen J.E."/>
            <person name="Ambesi-Impiombato A."/>
            <person name="Apweiler R."/>
            <person name="Aturaliya R.N."/>
            <person name="Bailey T.L."/>
            <person name="Bansal M."/>
            <person name="Baxter L."/>
            <person name="Beisel K.W."/>
            <person name="Bersano T."/>
            <person name="Bono H."/>
            <person name="Chalk A.M."/>
            <person name="Chiu K.P."/>
            <person name="Choudhary V."/>
            <person name="Christoffels A."/>
            <person name="Clutterbuck D.R."/>
            <person name="Crowe M.L."/>
            <person name="Dalla E."/>
            <person name="Dalrymple B.P."/>
            <person name="de Bono B."/>
            <person name="Della Gatta G."/>
            <person name="di Bernardo D."/>
            <person name="Down T."/>
            <person name="Engstrom P."/>
            <person name="Fagiolini M."/>
            <person name="Faulkner G."/>
            <person name="Fletcher C.F."/>
            <person name="Fukushima T."/>
            <person name="Furuno M."/>
            <person name="Futaki S."/>
            <person name="Gariboldi M."/>
            <person name="Georgii-Hemming P."/>
            <person name="Gingeras T.R."/>
            <person name="Gojobori T."/>
            <person name="Green R.E."/>
            <person name="Gustincich S."/>
            <person name="Harbers M."/>
            <person name="Hayashi Y."/>
            <person name="Hensch T.K."/>
            <person name="Hirokawa N."/>
            <person name="Hill D."/>
            <person name="Huminiecki L."/>
            <person name="Iacono M."/>
            <person name="Ikeo K."/>
            <person name="Iwama A."/>
            <person name="Ishikawa T."/>
            <person name="Jakt M."/>
            <person name="Kanapin A."/>
            <person name="Katoh M."/>
            <person name="Kawasawa Y."/>
            <person name="Kelso J."/>
            <person name="Kitamura H."/>
            <person name="Kitano H."/>
            <person name="Kollias G."/>
            <person name="Krishnan S.P."/>
            <person name="Kruger A."/>
            <person name="Kummerfeld S.K."/>
            <person name="Kurochkin I.V."/>
            <person name="Lareau L.F."/>
            <person name="Lazarevic D."/>
            <person name="Lipovich L."/>
            <person name="Liu J."/>
            <person name="Liuni S."/>
            <person name="McWilliam S."/>
            <person name="Madan Babu M."/>
            <person name="Madera M."/>
            <person name="Marchionni L."/>
            <person name="Matsuda H."/>
            <person name="Matsuzawa S."/>
            <person name="Miki H."/>
            <person name="Mignone F."/>
            <person name="Miyake S."/>
            <person name="Morris K."/>
            <person name="Mottagui-Tabar S."/>
            <person name="Mulder N."/>
            <person name="Nakano N."/>
            <person name="Nakauchi H."/>
            <person name="Ng P."/>
            <person name="Nilsson R."/>
            <person name="Nishiguchi S."/>
            <person name="Nishikawa S."/>
            <person name="Nori F."/>
            <person name="Ohara O."/>
            <person name="Okazaki Y."/>
            <person name="Orlando V."/>
            <person name="Pang K.C."/>
            <person name="Pavan W.J."/>
            <person name="Pavesi G."/>
            <person name="Pesole G."/>
            <person name="Petrovsky N."/>
            <person name="Piazza S."/>
            <person name="Reed J."/>
            <person name="Reid J.F."/>
            <person name="Ring B.Z."/>
            <person name="Ringwald M."/>
            <person name="Rost B."/>
            <person name="Ruan Y."/>
            <person name="Salzberg S.L."/>
            <person name="Sandelin A."/>
            <person name="Schneider C."/>
            <person name="Schoenbach C."/>
            <person name="Sekiguchi K."/>
            <person name="Semple C.A."/>
            <person name="Seno S."/>
            <person name="Sessa L."/>
            <person name="Sheng Y."/>
            <person name="Shibata Y."/>
            <person name="Shimada H."/>
            <person name="Shimada K."/>
            <person name="Silva D."/>
            <person name="Sinclair B."/>
            <person name="Sperling S."/>
            <person name="Stupka E."/>
            <person name="Sugiura K."/>
            <person name="Sultana R."/>
            <person name="Takenaka Y."/>
            <person name="Taki K."/>
            <person name="Tammoja K."/>
            <person name="Tan S.L."/>
            <person name="Tang S."/>
            <person name="Taylor M.S."/>
            <person name="Tegner J."/>
            <person name="Teichmann S.A."/>
            <person name="Ueda H.R."/>
            <person name="van Nimwegen E."/>
            <person name="Verardo R."/>
            <person name="Wei C.L."/>
            <person name="Yagi K."/>
            <person name="Yamanishi H."/>
            <person name="Zabarovsky E."/>
            <person name="Zhu S."/>
            <person name="Zimmer A."/>
            <person name="Hide W."/>
            <person name="Bult C."/>
            <person name="Grimmond S.M."/>
            <person name="Teasdale R.D."/>
            <person name="Liu E.T."/>
            <person name="Brusic V."/>
            <person name="Quackenbush J."/>
            <person name="Wahlestedt C."/>
            <person name="Mattick J.S."/>
            <person name="Hume D.A."/>
            <person name="Kai C."/>
            <person name="Sasaki D."/>
            <person name="Tomaru Y."/>
            <person name="Fukuda S."/>
            <person name="Kanamori-Katayama M."/>
            <person name="Suzuki M."/>
            <person name="Aoki J."/>
            <person name="Arakawa T."/>
            <person name="Iida J."/>
            <person name="Imamura K."/>
            <person name="Itoh M."/>
            <person name="Kato T."/>
            <person name="Kawaji H."/>
            <person name="Kawagashira N."/>
            <person name="Kawashima T."/>
            <person name="Kojima M."/>
            <person name="Kondo S."/>
            <person name="Konno H."/>
            <person name="Nakano K."/>
            <person name="Ninomiya N."/>
            <person name="Nishio T."/>
            <person name="Okada M."/>
            <person name="Plessy C."/>
            <person name="Shibata K."/>
            <person name="Shiraki T."/>
            <person name="Suzuki S."/>
            <person name="Tagami M."/>
            <person name="Waki K."/>
            <person name="Watahiki A."/>
            <person name="Okamura-Oho Y."/>
            <person name="Suzuki H."/>
            <person name="Kawai J."/>
            <person name="Hayashizaki Y."/>
        </authorList>
    </citation>
    <scope>NUCLEOTIDE SEQUENCE [LARGE SCALE MRNA]</scope>
    <source>
        <strain>C57BL/6J</strain>
        <tissue>Hypothalamus</tissue>
    </source>
</reference>
<reference key="2">
    <citation type="journal article" date="2003" name="Proc. Natl. Acad. Sci. U.S.A.">
        <title>The G protein-coupled receptor repertoires of human and mouse.</title>
        <authorList>
            <person name="Vassilatis D.K."/>
            <person name="Hohmann J.G."/>
            <person name="Zeng H."/>
            <person name="Li F."/>
            <person name="Ranchalis J.E."/>
            <person name="Mortrud M.T."/>
            <person name="Brown A."/>
            <person name="Rodriguez S.S."/>
            <person name="Weller J.R."/>
            <person name="Wright A.C."/>
            <person name="Bergmann J.E."/>
            <person name="Gaitanaris G.A."/>
        </authorList>
    </citation>
    <scope>NUCLEOTIDE SEQUENCE [LARGE SCALE MRNA] OF 141-217</scope>
</reference>
<reference key="3">
    <citation type="journal article" date="2014" name="N. Engl. J. Med.">
        <title>Gigantism and acromegaly due to Xq26 microduplications and GPR101 mutation.</title>
        <authorList>
            <person name="Trivellin G."/>
            <person name="Daly A.F."/>
            <person name="Faucz F.R."/>
            <person name="Yuan B."/>
            <person name="Rostomyan L."/>
            <person name="Larco D.O."/>
            <person name="Schernthaner-Reiter M.H."/>
            <person name="Szarek E."/>
            <person name="Leal L.F."/>
            <person name="Caberg J.H."/>
            <person name="Castermans E."/>
            <person name="Villa C."/>
            <person name="Dimopoulos A."/>
            <person name="Chittiboina P."/>
            <person name="Xekouki P."/>
            <person name="Shah N."/>
            <person name="Metzger D."/>
            <person name="Lysy P.A."/>
            <person name="Ferrante E."/>
            <person name="Strebkova N."/>
            <person name="Mazerkina N."/>
            <person name="Zatelli M.C."/>
            <person name="Lodish M."/>
            <person name="Horvath A."/>
            <person name="de Alexandre R.B."/>
            <person name="Manning A.D."/>
            <person name="Levy I."/>
            <person name="Keil M.F."/>
            <person name="Sierra M.L."/>
            <person name="Palmeira L."/>
            <person name="Coppieters W."/>
            <person name="Georges M."/>
            <person name="Naves L.A."/>
            <person name="Jamar M."/>
            <person name="Bours V."/>
            <person name="Wu T.J."/>
            <person name="Choong C.S."/>
            <person name="Bertherat J."/>
            <person name="Chanson P."/>
            <person name="Kamenicky P."/>
            <person name="Farrell W.E."/>
            <person name="Barlier A."/>
            <person name="Quezado M."/>
            <person name="Bjelobaba I."/>
            <person name="Stojilkovic S.S."/>
            <person name="Wess J."/>
            <person name="Costanzi S."/>
            <person name="Liu P."/>
            <person name="Lupski J.R."/>
            <person name="Beckers A."/>
            <person name="Stratakis C.A."/>
        </authorList>
    </citation>
    <scope>TISSUE SPECIFICITY</scope>
</reference>
<dbReference type="EMBL" id="AK138185">
    <property type="protein sequence ID" value="BAE23572.1"/>
    <property type="molecule type" value="mRNA"/>
</dbReference>
<dbReference type="EMBL" id="AK138370">
    <property type="protein sequence ID" value="BAE23636.1"/>
    <property type="molecule type" value="mRNA"/>
</dbReference>
<dbReference type="EMBL" id="AY255576">
    <property type="protein sequence ID" value="AAO85088.1"/>
    <property type="molecule type" value="mRNA"/>
</dbReference>
<dbReference type="CCDS" id="CCDS30154.1"/>
<dbReference type="RefSeq" id="NP_001028532.1">
    <property type="nucleotide sequence ID" value="NM_001033360.3"/>
</dbReference>
<dbReference type="SMR" id="Q80T62"/>
<dbReference type="FunCoup" id="Q80T62">
    <property type="interactions" value="71"/>
</dbReference>
<dbReference type="STRING" id="10090.ENSMUSP00000058183"/>
<dbReference type="GlyCosmos" id="Q80T62">
    <property type="glycosylation" value="2 sites, No reported glycans"/>
</dbReference>
<dbReference type="GlyGen" id="Q80T62">
    <property type="glycosylation" value="2 sites, 1 N-linked glycan (1 site)"/>
</dbReference>
<dbReference type="iPTMnet" id="Q80T62"/>
<dbReference type="PhosphoSitePlus" id="Q80T62"/>
<dbReference type="PaxDb" id="10090-ENSMUSP00000058183"/>
<dbReference type="ProteomicsDB" id="271422"/>
<dbReference type="Antibodypedia" id="392">
    <property type="antibodies" value="246 antibodies from 31 providers"/>
</dbReference>
<dbReference type="Ensembl" id="ENSMUST00000057645.6">
    <property type="protein sequence ID" value="ENSMUSP00000058183.6"/>
    <property type="gene ID" value="ENSMUSG00000036357.6"/>
</dbReference>
<dbReference type="GeneID" id="245424"/>
<dbReference type="KEGG" id="mmu:245424"/>
<dbReference type="UCSC" id="uc009thn.2">
    <property type="organism name" value="mouse"/>
</dbReference>
<dbReference type="AGR" id="MGI:2685211"/>
<dbReference type="CTD" id="83550"/>
<dbReference type="MGI" id="MGI:2685211">
    <property type="gene designation" value="Gpr101"/>
</dbReference>
<dbReference type="VEuPathDB" id="HostDB:ENSMUSG00000036357"/>
<dbReference type="eggNOG" id="KOG3656">
    <property type="taxonomic scope" value="Eukaryota"/>
</dbReference>
<dbReference type="GeneTree" id="ENSGT00940000162539"/>
<dbReference type="HOGENOM" id="CLU_009579_3_13_1"/>
<dbReference type="InParanoid" id="Q80T62"/>
<dbReference type="OMA" id="TPRRGYM"/>
<dbReference type="OrthoDB" id="5980076at2759"/>
<dbReference type="PhylomeDB" id="Q80T62"/>
<dbReference type="TreeFam" id="TF331895"/>
<dbReference type="BioGRID-ORCS" id="245424">
    <property type="hits" value="3 hits in 76 CRISPR screens"/>
</dbReference>
<dbReference type="PRO" id="PR:Q80T62"/>
<dbReference type="Proteomes" id="UP000000589">
    <property type="component" value="Chromosome X"/>
</dbReference>
<dbReference type="RNAct" id="Q80T62">
    <property type="molecule type" value="protein"/>
</dbReference>
<dbReference type="Bgee" id="ENSMUSG00000036357">
    <property type="expression patterns" value="Expressed in arcuate nucleus of hypothalamus and 62 other cell types or tissues"/>
</dbReference>
<dbReference type="ExpressionAtlas" id="Q80T62">
    <property type="expression patterns" value="baseline and differential"/>
</dbReference>
<dbReference type="GO" id="GO:0005886">
    <property type="term" value="C:plasma membrane"/>
    <property type="evidence" value="ECO:0007669"/>
    <property type="project" value="UniProtKB-SubCell"/>
</dbReference>
<dbReference type="GO" id="GO:0043235">
    <property type="term" value="C:receptor complex"/>
    <property type="evidence" value="ECO:0000266"/>
    <property type="project" value="MGI"/>
</dbReference>
<dbReference type="GO" id="GO:0004930">
    <property type="term" value="F:G protein-coupled receptor activity"/>
    <property type="evidence" value="ECO:0007669"/>
    <property type="project" value="UniProtKB-KW"/>
</dbReference>
<dbReference type="Gene3D" id="1.20.1070.10">
    <property type="entry name" value="Rhodopsin 7-helix transmembrane proteins"/>
    <property type="match status" value="1"/>
</dbReference>
<dbReference type="InterPro" id="IPR000276">
    <property type="entry name" value="GPCR_Rhodpsn"/>
</dbReference>
<dbReference type="InterPro" id="IPR017452">
    <property type="entry name" value="GPCR_Rhodpsn_7TM"/>
</dbReference>
<dbReference type="PANTHER" id="PTHR22752">
    <property type="entry name" value="G PROTEIN-COUPLED RECEPTOR"/>
    <property type="match status" value="1"/>
</dbReference>
<dbReference type="PANTHER" id="PTHR22752:SF15">
    <property type="entry name" value="G-PROTEIN COUPLED RECEPTOR 101-RELATED"/>
    <property type="match status" value="1"/>
</dbReference>
<dbReference type="Pfam" id="PF00001">
    <property type="entry name" value="7tm_1"/>
    <property type="match status" value="1"/>
</dbReference>
<dbReference type="PRINTS" id="PR00237">
    <property type="entry name" value="GPCRRHODOPSN"/>
</dbReference>
<dbReference type="SUPFAM" id="SSF81321">
    <property type="entry name" value="Family A G protein-coupled receptor-like"/>
    <property type="match status" value="1"/>
</dbReference>
<dbReference type="PROSITE" id="PS00237">
    <property type="entry name" value="G_PROTEIN_RECEP_F1_1"/>
    <property type="match status" value="1"/>
</dbReference>
<dbReference type="PROSITE" id="PS50262">
    <property type="entry name" value="G_PROTEIN_RECEP_F1_2"/>
    <property type="match status" value="1"/>
</dbReference>
<accession>Q80T62</accession>
<accession>Q3UUI9</accession>
<evidence type="ECO:0000255" key="1"/>
<evidence type="ECO:0000255" key="2">
    <source>
        <dbReference type="PROSITE-ProRule" id="PRU00521"/>
    </source>
</evidence>
<evidence type="ECO:0000256" key="3">
    <source>
        <dbReference type="SAM" id="MobiDB-lite"/>
    </source>
</evidence>
<evidence type="ECO:0000269" key="4">
    <source>
    </source>
</evidence>
<gene>
    <name type="primary">Gpr101</name>
    <name type="synonym">Gm365</name>
</gene>
<protein>
    <recommendedName>
        <fullName>Probable G-protein coupled receptor 101</fullName>
    </recommendedName>
</protein>
<comment type="function">
    <text>Orphan receptor.</text>
</comment>
<comment type="subcellular location">
    <subcellularLocation>
        <location>Cell membrane</location>
        <topology>Multi-pass membrane protein</topology>
    </subcellularLocation>
</comment>
<comment type="tissue specificity">
    <text evidence="4">Expressed in the brain in hypothalamus.</text>
</comment>
<comment type="similarity">
    <text evidence="2">Belongs to the G-protein coupled receptor 1 family.</text>
</comment>
<feature type="chain" id="PRO_0000069602" description="Probable G-protein coupled receptor 101">
    <location>
        <begin position="1"/>
        <end position="511"/>
    </location>
</feature>
<feature type="topological domain" description="Extracellular" evidence="1">
    <location>
        <begin position="1"/>
        <end position="35"/>
    </location>
</feature>
<feature type="transmembrane region" description="Helical; Name=1" evidence="1">
    <location>
        <begin position="36"/>
        <end position="56"/>
    </location>
</feature>
<feature type="topological domain" description="Cytoplasmic" evidence="1">
    <location>
        <begin position="57"/>
        <end position="67"/>
    </location>
</feature>
<feature type="transmembrane region" description="Helical; Name=2" evidence="1">
    <location>
        <begin position="68"/>
        <end position="90"/>
    </location>
</feature>
<feature type="topological domain" description="Extracellular" evidence="1">
    <location>
        <begin position="91"/>
        <end position="106"/>
    </location>
</feature>
<feature type="transmembrane region" description="Helical; Name=3" evidence="1">
    <location>
        <begin position="107"/>
        <end position="127"/>
    </location>
</feature>
<feature type="topological domain" description="Cytoplasmic" evidence="1">
    <location>
        <begin position="128"/>
        <end position="149"/>
    </location>
</feature>
<feature type="transmembrane region" description="Helical; Name=4" evidence="1">
    <location>
        <begin position="150"/>
        <end position="170"/>
    </location>
</feature>
<feature type="topological domain" description="Extracellular" evidence="1">
    <location>
        <begin position="171"/>
        <end position="196"/>
    </location>
</feature>
<feature type="transmembrane region" description="Helical; Name=5" evidence="1">
    <location>
        <begin position="197"/>
        <end position="217"/>
    </location>
</feature>
<feature type="topological domain" description="Cytoplasmic" evidence="1">
    <location>
        <begin position="218"/>
        <end position="398"/>
    </location>
</feature>
<feature type="transmembrane region" description="Helical; Name=6" evidence="1">
    <location>
        <begin position="399"/>
        <end position="419"/>
    </location>
</feature>
<feature type="topological domain" description="Extracellular" evidence="1">
    <location>
        <begin position="420"/>
        <end position="432"/>
    </location>
</feature>
<feature type="transmembrane region" description="Helical; Name=7" evidence="1">
    <location>
        <begin position="433"/>
        <end position="453"/>
    </location>
</feature>
<feature type="topological domain" description="Cytoplasmic" evidence="1">
    <location>
        <begin position="454"/>
        <end position="511"/>
    </location>
</feature>
<feature type="region of interest" description="Disordered" evidence="3">
    <location>
        <begin position="240"/>
        <end position="315"/>
    </location>
</feature>
<feature type="region of interest" description="Disordered" evidence="3">
    <location>
        <begin position="367"/>
        <end position="386"/>
    </location>
</feature>
<feature type="region of interest" description="Disordered" evidence="3">
    <location>
        <begin position="476"/>
        <end position="511"/>
    </location>
</feature>
<feature type="compositionally biased region" description="Basic and acidic residues" evidence="3">
    <location>
        <begin position="240"/>
        <end position="261"/>
    </location>
</feature>
<feature type="compositionally biased region" description="Polar residues" evidence="3">
    <location>
        <begin position="376"/>
        <end position="385"/>
    </location>
</feature>
<feature type="compositionally biased region" description="Basic and acidic residues" evidence="3">
    <location>
        <begin position="477"/>
        <end position="490"/>
    </location>
</feature>
<feature type="glycosylation site" description="N-linked (GlcNAc...) asparagine" evidence="1">
    <location>
        <position position="7"/>
    </location>
</feature>
<feature type="glycosylation site" description="N-linked (GlcNAc...) asparagine" evidence="1">
    <location>
        <position position="13"/>
    </location>
</feature>
<feature type="disulfide bond" evidence="2">
    <location>
        <begin position="104"/>
        <end position="182"/>
    </location>
</feature>
<name>GP101_MOUSE</name>
<keyword id="KW-1003">Cell membrane</keyword>
<keyword id="KW-1015">Disulfide bond</keyword>
<keyword id="KW-0297">G-protein coupled receptor</keyword>
<keyword id="KW-0325">Glycoprotein</keyword>
<keyword id="KW-0472">Membrane</keyword>
<keyword id="KW-0675">Receptor</keyword>
<keyword id="KW-1185">Reference proteome</keyword>
<keyword id="KW-0807">Transducer</keyword>
<keyword id="KW-0812">Transmembrane</keyword>
<keyword id="KW-1133">Transmembrane helix</keyword>